<accession>B8DUL6</accession>
<name>LEPA_BIFA0</name>
<organism>
    <name type="scientific">Bifidobacterium animalis subsp. lactis (strain AD011)</name>
    <dbReference type="NCBI Taxonomy" id="442563"/>
    <lineage>
        <taxon>Bacteria</taxon>
        <taxon>Bacillati</taxon>
        <taxon>Actinomycetota</taxon>
        <taxon>Actinomycetes</taxon>
        <taxon>Bifidobacteriales</taxon>
        <taxon>Bifidobacteriaceae</taxon>
        <taxon>Bifidobacterium</taxon>
    </lineage>
</organism>
<evidence type="ECO:0000255" key="1">
    <source>
        <dbReference type="HAMAP-Rule" id="MF_00071"/>
    </source>
</evidence>
<evidence type="ECO:0000256" key="2">
    <source>
        <dbReference type="SAM" id="MobiDB-lite"/>
    </source>
</evidence>
<gene>
    <name evidence="1" type="primary">lepA</name>
    <name type="ordered locus">BLA_1410</name>
</gene>
<proteinExistence type="inferred from homology"/>
<feature type="chain" id="PRO_1000118037" description="Elongation factor 4">
    <location>
        <begin position="1"/>
        <end position="626"/>
    </location>
</feature>
<feature type="domain" description="tr-type G">
    <location>
        <begin position="14"/>
        <end position="195"/>
    </location>
</feature>
<feature type="region of interest" description="Disordered" evidence="2">
    <location>
        <begin position="603"/>
        <end position="626"/>
    </location>
</feature>
<feature type="compositionally biased region" description="Basic and acidic residues" evidence="2">
    <location>
        <begin position="609"/>
        <end position="626"/>
    </location>
</feature>
<feature type="binding site" evidence="1">
    <location>
        <begin position="26"/>
        <end position="31"/>
    </location>
    <ligand>
        <name>GTP</name>
        <dbReference type="ChEBI" id="CHEBI:37565"/>
    </ligand>
</feature>
<feature type="binding site" evidence="1">
    <location>
        <begin position="142"/>
        <end position="145"/>
    </location>
    <ligand>
        <name>GTP</name>
        <dbReference type="ChEBI" id="CHEBI:37565"/>
    </ligand>
</feature>
<reference key="1">
    <citation type="journal article" date="2009" name="J. Bacteriol.">
        <title>Genome sequence of the probiotic bacterium Bifidobacterium animalis subsp. lactis AD011.</title>
        <authorList>
            <person name="Kim J.F."/>
            <person name="Jeong H."/>
            <person name="Yu D.S."/>
            <person name="Choi S.-H."/>
            <person name="Hur C.-G."/>
            <person name="Park M.-S."/>
            <person name="Yoon S.H."/>
            <person name="Kim D.-W."/>
            <person name="Ji G.E."/>
            <person name="Park H.-S."/>
            <person name="Oh T.K."/>
        </authorList>
    </citation>
    <scope>NUCLEOTIDE SEQUENCE [LARGE SCALE GENOMIC DNA]</scope>
    <source>
        <strain>AD011</strain>
    </source>
</reference>
<comment type="function">
    <text evidence="1">Required for accurate and efficient protein synthesis under certain stress conditions. May act as a fidelity factor of the translation reaction, by catalyzing a one-codon backward translocation of tRNAs on improperly translocated ribosomes. Back-translocation proceeds from a post-translocation (POST) complex to a pre-translocation (PRE) complex, thus giving elongation factor G a second chance to translocate the tRNAs correctly. Binds to ribosomes in a GTP-dependent manner.</text>
</comment>
<comment type="catalytic activity">
    <reaction evidence="1">
        <text>GTP + H2O = GDP + phosphate + H(+)</text>
        <dbReference type="Rhea" id="RHEA:19669"/>
        <dbReference type="ChEBI" id="CHEBI:15377"/>
        <dbReference type="ChEBI" id="CHEBI:15378"/>
        <dbReference type="ChEBI" id="CHEBI:37565"/>
        <dbReference type="ChEBI" id="CHEBI:43474"/>
        <dbReference type="ChEBI" id="CHEBI:58189"/>
        <dbReference type="EC" id="3.6.5.n1"/>
    </reaction>
</comment>
<comment type="subcellular location">
    <subcellularLocation>
        <location evidence="1">Cell membrane</location>
        <topology evidence="1">Peripheral membrane protein</topology>
        <orientation evidence="1">Cytoplasmic side</orientation>
    </subcellularLocation>
</comment>
<comment type="similarity">
    <text evidence="1">Belongs to the TRAFAC class translation factor GTPase superfamily. Classic translation factor GTPase family. LepA subfamily.</text>
</comment>
<dbReference type="EC" id="3.6.5.n1" evidence="1"/>
<dbReference type="EMBL" id="CP001213">
    <property type="protein sequence ID" value="ACL29695.1"/>
    <property type="molecule type" value="Genomic_DNA"/>
</dbReference>
<dbReference type="RefSeq" id="WP_004217869.1">
    <property type="nucleotide sequence ID" value="NC_011835.1"/>
</dbReference>
<dbReference type="SMR" id="B8DUL6"/>
<dbReference type="STRING" id="442563.BLA_1410"/>
<dbReference type="GeneID" id="29696277"/>
<dbReference type="KEGG" id="bla:BLA_1410"/>
<dbReference type="HOGENOM" id="CLU_009995_3_3_11"/>
<dbReference type="Proteomes" id="UP000002456">
    <property type="component" value="Chromosome"/>
</dbReference>
<dbReference type="GO" id="GO:0005886">
    <property type="term" value="C:plasma membrane"/>
    <property type="evidence" value="ECO:0007669"/>
    <property type="project" value="UniProtKB-SubCell"/>
</dbReference>
<dbReference type="GO" id="GO:0005525">
    <property type="term" value="F:GTP binding"/>
    <property type="evidence" value="ECO:0007669"/>
    <property type="project" value="UniProtKB-UniRule"/>
</dbReference>
<dbReference type="GO" id="GO:0003924">
    <property type="term" value="F:GTPase activity"/>
    <property type="evidence" value="ECO:0007669"/>
    <property type="project" value="UniProtKB-UniRule"/>
</dbReference>
<dbReference type="GO" id="GO:0043022">
    <property type="term" value="F:ribosome binding"/>
    <property type="evidence" value="ECO:0007669"/>
    <property type="project" value="UniProtKB-UniRule"/>
</dbReference>
<dbReference type="GO" id="GO:0003746">
    <property type="term" value="F:translation elongation factor activity"/>
    <property type="evidence" value="ECO:0007669"/>
    <property type="project" value="UniProtKB-UniRule"/>
</dbReference>
<dbReference type="GO" id="GO:0045727">
    <property type="term" value="P:positive regulation of translation"/>
    <property type="evidence" value="ECO:0007669"/>
    <property type="project" value="UniProtKB-UniRule"/>
</dbReference>
<dbReference type="CDD" id="cd03699">
    <property type="entry name" value="EF4_II"/>
    <property type="match status" value="1"/>
</dbReference>
<dbReference type="CDD" id="cd16260">
    <property type="entry name" value="EF4_III"/>
    <property type="match status" value="1"/>
</dbReference>
<dbReference type="CDD" id="cd01890">
    <property type="entry name" value="LepA"/>
    <property type="match status" value="1"/>
</dbReference>
<dbReference type="CDD" id="cd03709">
    <property type="entry name" value="lepA_C"/>
    <property type="match status" value="1"/>
</dbReference>
<dbReference type="FunFam" id="3.40.50.300:FF:000078">
    <property type="entry name" value="Elongation factor 4"/>
    <property type="match status" value="1"/>
</dbReference>
<dbReference type="FunFam" id="2.40.30.10:FF:000015">
    <property type="entry name" value="Translation factor GUF1, mitochondrial"/>
    <property type="match status" value="1"/>
</dbReference>
<dbReference type="FunFam" id="3.30.70.240:FF:000007">
    <property type="entry name" value="Translation factor GUF1, mitochondrial"/>
    <property type="match status" value="1"/>
</dbReference>
<dbReference type="FunFam" id="3.30.70.2570:FF:000001">
    <property type="entry name" value="Translation factor GUF1, mitochondrial"/>
    <property type="match status" value="1"/>
</dbReference>
<dbReference type="FunFam" id="3.30.70.870:FF:000004">
    <property type="entry name" value="Translation factor GUF1, mitochondrial"/>
    <property type="match status" value="1"/>
</dbReference>
<dbReference type="Gene3D" id="3.30.70.240">
    <property type="match status" value="1"/>
</dbReference>
<dbReference type="Gene3D" id="3.30.70.2570">
    <property type="entry name" value="Elongation factor 4, C-terminal domain"/>
    <property type="match status" value="1"/>
</dbReference>
<dbReference type="Gene3D" id="3.30.70.870">
    <property type="entry name" value="Elongation Factor G (Translational Gtpase), domain 3"/>
    <property type="match status" value="1"/>
</dbReference>
<dbReference type="Gene3D" id="3.40.50.300">
    <property type="entry name" value="P-loop containing nucleotide triphosphate hydrolases"/>
    <property type="match status" value="1"/>
</dbReference>
<dbReference type="Gene3D" id="2.40.30.10">
    <property type="entry name" value="Translation factors"/>
    <property type="match status" value="1"/>
</dbReference>
<dbReference type="HAMAP" id="MF_00071">
    <property type="entry name" value="LepA"/>
    <property type="match status" value="1"/>
</dbReference>
<dbReference type="InterPro" id="IPR006297">
    <property type="entry name" value="EF-4"/>
</dbReference>
<dbReference type="InterPro" id="IPR035647">
    <property type="entry name" value="EFG_III/V"/>
</dbReference>
<dbReference type="InterPro" id="IPR000640">
    <property type="entry name" value="EFG_V-like"/>
</dbReference>
<dbReference type="InterPro" id="IPR004161">
    <property type="entry name" value="EFTu-like_2"/>
</dbReference>
<dbReference type="InterPro" id="IPR031157">
    <property type="entry name" value="G_TR_CS"/>
</dbReference>
<dbReference type="InterPro" id="IPR038363">
    <property type="entry name" value="LepA_C_sf"/>
</dbReference>
<dbReference type="InterPro" id="IPR013842">
    <property type="entry name" value="LepA_CTD"/>
</dbReference>
<dbReference type="InterPro" id="IPR035654">
    <property type="entry name" value="LepA_IV"/>
</dbReference>
<dbReference type="InterPro" id="IPR027417">
    <property type="entry name" value="P-loop_NTPase"/>
</dbReference>
<dbReference type="InterPro" id="IPR005225">
    <property type="entry name" value="Small_GTP-bd"/>
</dbReference>
<dbReference type="InterPro" id="IPR000795">
    <property type="entry name" value="T_Tr_GTP-bd_dom"/>
</dbReference>
<dbReference type="InterPro" id="IPR009000">
    <property type="entry name" value="Transl_B-barrel_sf"/>
</dbReference>
<dbReference type="NCBIfam" id="TIGR01393">
    <property type="entry name" value="lepA"/>
    <property type="match status" value="1"/>
</dbReference>
<dbReference type="NCBIfam" id="TIGR00231">
    <property type="entry name" value="small_GTP"/>
    <property type="match status" value="1"/>
</dbReference>
<dbReference type="PANTHER" id="PTHR43512:SF4">
    <property type="entry name" value="TRANSLATION FACTOR GUF1 HOMOLOG, CHLOROPLASTIC"/>
    <property type="match status" value="1"/>
</dbReference>
<dbReference type="PANTHER" id="PTHR43512">
    <property type="entry name" value="TRANSLATION FACTOR GUF1-RELATED"/>
    <property type="match status" value="1"/>
</dbReference>
<dbReference type="Pfam" id="PF00679">
    <property type="entry name" value="EFG_C"/>
    <property type="match status" value="1"/>
</dbReference>
<dbReference type="Pfam" id="PF00009">
    <property type="entry name" value="GTP_EFTU"/>
    <property type="match status" value="1"/>
</dbReference>
<dbReference type="Pfam" id="PF03144">
    <property type="entry name" value="GTP_EFTU_D2"/>
    <property type="match status" value="1"/>
</dbReference>
<dbReference type="Pfam" id="PF06421">
    <property type="entry name" value="LepA_C"/>
    <property type="match status" value="1"/>
</dbReference>
<dbReference type="PRINTS" id="PR00315">
    <property type="entry name" value="ELONGATNFCT"/>
</dbReference>
<dbReference type="SMART" id="SM00838">
    <property type="entry name" value="EFG_C"/>
    <property type="match status" value="1"/>
</dbReference>
<dbReference type="SUPFAM" id="SSF54980">
    <property type="entry name" value="EF-G C-terminal domain-like"/>
    <property type="match status" value="2"/>
</dbReference>
<dbReference type="SUPFAM" id="SSF52540">
    <property type="entry name" value="P-loop containing nucleoside triphosphate hydrolases"/>
    <property type="match status" value="1"/>
</dbReference>
<dbReference type="SUPFAM" id="SSF50447">
    <property type="entry name" value="Translation proteins"/>
    <property type="match status" value="1"/>
</dbReference>
<dbReference type="PROSITE" id="PS00301">
    <property type="entry name" value="G_TR_1"/>
    <property type="match status" value="1"/>
</dbReference>
<dbReference type="PROSITE" id="PS51722">
    <property type="entry name" value="G_TR_2"/>
    <property type="match status" value="1"/>
</dbReference>
<sequence>MSEQHNQPGFTDQSLIRNFCIIAHIDHGKSTVADRILQLSGIVPEREMRDRFLDRMDIEQERGITIKSQAVRVPWSYDGQEYTLGMIDTPGHVDFTYEVSRALAACEGAVLLVDATQGIEAQTLSNLYMAIDHDLTIIPVLNKIDLPSAEPDKHAEEIASLIGCEPSDVLRVSGKTGEGVRELLDRIVVDVPAPTGDPDADARALIFDSVYDSYRGIVTYIRMVDGELRSREKLHMMGVGTTYDPIEIGVISPDMMPTRALGAGEVGYVITGAKDVSQSKVGDTITSTAHPATEPLPGYRDPQPMVYAGLFPIDNAQFPELREALDKLKLNDAALIYEPETSVALGFGFRCGFLGLLHMEIVSERLSREFGLDLISTAPNVPYEVTAEDGTVHRVTNPSEFPDGKIKRIVEPMVAADIITPKEFIGAVMDLCQEHRGTMSTMEYISTDRVEMHYRIPLAEIVFDFFDQLKSRTKGYASLDYHDDGEEAADLVKVDILIQGEKIDAFSAIVHRDKAYSYGVMMTKKLRELIPRQQFEIPIQAAIGSRIIARENIRALRKDVLAKCYGGDITRKRKLLEKQKAGKKRMKMLGHVEVPQEAFVAALSTGEGGNDRDTKDKIRAAQKSEG</sequence>
<keyword id="KW-1003">Cell membrane</keyword>
<keyword id="KW-0342">GTP-binding</keyword>
<keyword id="KW-0378">Hydrolase</keyword>
<keyword id="KW-0472">Membrane</keyword>
<keyword id="KW-0547">Nucleotide-binding</keyword>
<keyword id="KW-0648">Protein biosynthesis</keyword>
<keyword id="KW-1185">Reference proteome</keyword>
<protein>
    <recommendedName>
        <fullName evidence="1">Elongation factor 4</fullName>
        <shortName evidence="1">EF-4</shortName>
        <ecNumber evidence="1">3.6.5.n1</ecNumber>
    </recommendedName>
    <alternativeName>
        <fullName evidence="1">Ribosomal back-translocase LepA</fullName>
    </alternativeName>
</protein>